<sequence length="185" mass="19898">MTTIVSVRRNNKVVIAGDGQVSLGNTVMKGNARKVRRLYNNKVLAGFAGGTADAFTLFERFESKLQMHQGHLTKAAVELAKDWRSDRALRRLEAILAVADETASLIITGNGDVLQPEHDLIAIGSGGNYAQAAAIALLENTELDARTIAEKALNIAGDICVFTNHHHTIEELEIPQAMLPQGASA</sequence>
<keyword id="KW-0021">Allosteric enzyme</keyword>
<keyword id="KW-0963">Cytoplasm</keyword>
<keyword id="KW-0378">Hydrolase</keyword>
<keyword id="KW-0479">Metal-binding</keyword>
<keyword id="KW-0645">Protease</keyword>
<keyword id="KW-0915">Sodium</keyword>
<keyword id="KW-0888">Threonine protease</keyword>
<organism>
    <name type="scientific">Vibrio cholerae serotype O1 (strain M66-2)</name>
    <dbReference type="NCBI Taxonomy" id="579112"/>
    <lineage>
        <taxon>Bacteria</taxon>
        <taxon>Pseudomonadati</taxon>
        <taxon>Pseudomonadota</taxon>
        <taxon>Gammaproteobacteria</taxon>
        <taxon>Vibrionales</taxon>
        <taxon>Vibrionaceae</taxon>
        <taxon>Vibrio</taxon>
    </lineage>
</organism>
<evidence type="ECO:0000255" key="1">
    <source>
        <dbReference type="HAMAP-Rule" id="MF_00248"/>
    </source>
</evidence>
<accession>C3LSA4</accession>
<gene>
    <name evidence="1" type="primary">hslV</name>
    <name type="ordered locus">VCM66_2595</name>
</gene>
<reference key="1">
    <citation type="journal article" date="2008" name="PLoS ONE">
        <title>A recalibrated molecular clock and independent origins for the cholera pandemic clones.</title>
        <authorList>
            <person name="Feng L."/>
            <person name="Reeves P.R."/>
            <person name="Lan R."/>
            <person name="Ren Y."/>
            <person name="Gao C."/>
            <person name="Zhou Z."/>
            <person name="Ren Y."/>
            <person name="Cheng J."/>
            <person name="Wang W."/>
            <person name="Wang J."/>
            <person name="Qian W."/>
            <person name="Li D."/>
            <person name="Wang L."/>
        </authorList>
    </citation>
    <scope>NUCLEOTIDE SEQUENCE [LARGE SCALE GENOMIC DNA]</scope>
    <source>
        <strain>M66-2</strain>
    </source>
</reference>
<protein>
    <recommendedName>
        <fullName evidence="1">ATP-dependent protease subunit HslV</fullName>
        <ecNumber evidence="1">3.4.25.2</ecNumber>
    </recommendedName>
</protein>
<name>HSLV_VIBCM</name>
<proteinExistence type="inferred from homology"/>
<comment type="function">
    <text evidence="1">Protease subunit of a proteasome-like degradation complex believed to be a general protein degrading machinery.</text>
</comment>
<comment type="catalytic activity">
    <reaction evidence="1">
        <text>ATP-dependent cleavage of peptide bonds with broad specificity.</text>
        <dbReference type="EC" id="3.4.25.2"/>
    </reaction>
</comment>
<comment type="activity regulation">
    <text evidence="1">Allosterically activated by HslU binding.</text>
</comment>
<comment type="subunit">
    <text evidence="1">A double ring-shaped homohexamer of HslV is capped on each side by a ring-shaped HslU homohexamer. The assembly of the HslU/HslV complex is dependent on binding of ATP.</text>
</comment>
<comment type="subcellular location">
    <subcellularLocation>
        <location evidence="1">Cytoplasm</location>
    </subcellularLocation>
</comment>
<comment type="similarity">
    <text evidence="1">Belongs to the peptidase T1B family. HslV subfamily.</text>
</comment>
<dbReference type="EC" id="3.4.25.2" evidence="1"/>
<dbReference type="EMBL" id="CP001233">
    <property type="protein sequence ID" value="ACP06891.1"/>
    <property type="molecule type" value="Genomic_DNA"/>
</dbReference>
<dbReference type="RefSeq" id="WP_000208249.1">
    <property type="nucleotide sequence ID" value="NC_012578.1"/>
</dbReference>
<dbReference type="SMR" id="C3LSA4"/>
<dbReference type="MEROPS" id="T01.006"/>
<dbReference type="GeneID" id="88785229"/>
<dbReference type="KEGG" id="vcm:VCM66_2595"/>
<dbReference type="HOGENOM" id="CLU_093872_1_0_6"/>
<dbReference type="Proteomes" id="UP000001217">
    <property type="component" value="Chromosome I"/>
</dbReference>
<dbReference type="GO" id="GO:0009376">
    <property type="term" value="C:HslUV protease complex"/>
    <property type="evidence" value="ECO:0007669"/>
    <property type="project" value="UniProtKB-UniRule"/>
</dbReference>
<dbReference type="GO" id="GO:0005839">
    <property type="term" value="C:proteasome core complex"/>
    <property type="evidence" value="ECO:0007669"/>
    <property type="project" value="InterPro"/>
</dbReference>
<dbReference type="GO" id="GO:0046872">
    <property type="term" value="F:metal ion binding"/>
    <property type="evidence" value="ECO:0007669"/>
    <property type="project" value="UniProtKB-KW"/>
</dbReference>
<dbReference type="GO" id="GO:0004298">
    <property type="term" value="F:threonine-type endopeptidase activity"/>
    <property type="evidence" value="ECO:0007669"/>
    <property type="project" value="UniProtKB-KW"/>
</dbReference>
<dbReference type="GO" id="GO:0051603">
    <property type="term" value="P:proteolysis involved in protein catabolic process"/>
    <property type="evidence" value="ECO:0007669"/>
    <property type="project" value="InterPro"/>
</dbReference>
<dbReference type="CDD" id="cd01913">
    <property type="entry name" value="protease_HslV"/>
    <property type="match status" value="1"/>
</dbReference>
<dbReference type="FunFam" id="3.60.20.10:FF:000002">
    <property type="entry name" value="ATP-dependent protease subunit HslV"/>
    <property type="match status" value="1"/>
</dbReference>
<dbReference type="Gene3D" id="3.60.20.10">
    <property type="entry name" value="Glutamine Phosphoribosylpyrophosphate, subunit 1, domain 1"/>
    <property type="match status" value="1"/>
</dbReference>
<dbReference type="HAMAP" id="MF_00248">
    <property type="entry name" value="HslV"/>
    <property type="match status" value="1"/>
</dbReference>
<dbReference type="InterPro" id="IPR022281">
    <property type="entry name" value="ATP-dep_Prtase_HsIV_su"/>
</dbReference>
<dbReference type="InterPro" id="IPR029055">
    <property type="entry name" value="Ntn_hydrolases_N"/>
</dbReference>
<dbReference type="InterPro" id="IPR001353">
    <property type="entry name" value="Proteasome_sua/b"/>
</dbReference>
<dbReference type="InterPro" id="IPR023333">
    <property type="entry name" value="Proteasome_suB-type"/>
</dbReference>
<dbReference type="NCBIfam" id="TIGR03692">
    <property type="entry name" value="ATP_dep_HslV"/>
    <property type="match status" value="1"/>
</dbReference>
<dbReference type="NCBIfam" id="NF003964">
    <property type="entry name" value="PRK05456.1"/>
    <property type="match status" value="1"/>
</dbReference>
<dbReference type="PANTHER" id="PTHR32194:SF0">
    <property type="entry name" value="ATP-DEPENDENT PROTEASE SUBUNIT HSLV"/>
    <property type="match status" value="1"/>
</dbReference>
<dbReference type="PANTHER" id="PTHR32194">
    <property type="entry name" value="METALLOPROTEASE TLDD"/>
    <property type="match status" value="1"/>
</dbReference>
<dbReference type="Pfam" id="PF00227">
    <property type="entry name" value="Proteasome"/>
    <property type="match status" value="1"/>
</dbReference>
<dbReference type="PIRSF" id="PIRSF039093">
    <property type="entry name" value="HslV"/>
    <property type="match status" value="1"/>
</dbReference>
<dbReference type="SUPFAM" id="SSF56235">
    <property type="entry name" value="N-terminal nucleophile aminohydrolases (Ntn hydrolases)"/>
    <property type="match status" value="1"/>
</dbReference>
<dbReference type="PROSITE" id="PS51476">
    <property type="entry name" value="PROTEASOME_BETA_2"/>
    <property type="match status" value="1"/>
</dbReference>
<feature type="chain" id="PRO_1000125420" description="ATP-dependent protease subunit HslV">
    <location>
        <begin position="1"/>
        <end position="185"/>
    </location>
</feature>
<feature type="active site" evidence="1">
    <location>
        <position position="2"/>
    </location>
</feature>
<feature type="binding site" evidence="1">
    <location>
        <position position="157"/>
    </location>
    <ligand>
        <name>Na(+)</name>
        <dbReference type="ChEBI" id="CHEBI:29101"/>
    </ligand>
</feature>
<feature type="binding site" evidence="1">
    <location>
        <position position="160"/>
    </location>
    <ligand>
        <name>Na(+)</name>
        <dbReference type="ChEBI" id="CHEBI:29101"/>
    </ligand>
</feature>
<feature type="binding site" evidence="1">
    <location>
        <position position="163"/>
    </location>
    <ligand>
        <name>Na(+)</name>
        <dbReference type="ChEBI" id="CHEBI:29101"/>
    </ligand>
</feature>